<keyword id="KW-0025">Alternative splicing</keyword>
<keyword id="KW-0472">Membrane</keyword>
<keyword id="KW-1185">Reference proteome</keyword>
<keyword id="KW-0812">Transmembrane</keyword>
<keyword id="KW-1133">Transmembrane helix</keyword>
<feature type="chain" id="PRO_0000285277" description="Protein PHLOEM PROTEIN 2-LIKE A2">
    <location>
        <begin position="1"/>
        <end position="194"/>
    </location>
</feature>
<feature type="transmembrane region" description="Helical" evidence="1">
    <location>
        <begin position="49"/>
        <end position="71"/>
    </location>
</feature>
<organism>
    <name type="scientific">Arabidopsis thaliana</name>
    <name type="common">Mouse-ear cress</name>
    <dbReference type="NCBI Taxonomy" id="3702"/>
    <lineage>
        <taxon>Eukaryota</taxon>
        <taxon>Viridiplantae</taxon>
        <taxon>Streptophyta</taxon>
        <taxon>Embryophyta</taxon>
        <taxon>Tracheophyta</taxon>
        <taxon>Spermatophyta</taxon>
        <taxon>Magnoliopsida</taxon>
        <taxon>eudicotyledons</taxon>
        <taxon>Gunneridae</taxon>
        <taxon>Pentapetalae</taxon>
        <taxon>rosids</taxon>
        <taxon>malvids</taxon>
        <taxon>Brassicales</taxon>
        <taxon>Brassicaceae</taxon>
        <taxon>Camelineae</taxon>
        <taxon>Arabidopsis</taxon>
    </lineage>
</organism>
<protein>
    <recommendedName>
        <fullName>Protein PHLOEM PROTEIN 2-LIKE A2</fullName>
        <shortName>AtPP2-A2</shortName>
    </recommendedName>
</protein>
<sequence length="194" mass="22480">MRVKRRKTVSCCTREISQLHGQSLKQINIGVGSLILTKHQGYEFYCKKVTFVFFCFFKISLNSAYLYTLYSDVRTEVAKMERVAWLEVVGKFETEKLTPNSLYEVVFVVKLIDSAKGWDFRVNFKLVLPTGETKERRENVNLLERNKWVEIPAGEFMISPEHLSGKIEFSMLEVKSDQWKSGLIVKGVAIRPKN</sequence>
<name>P2A02_ARATH</name>
<comment type="subcellular location">
    <subcellularLocation>
        <location evidence="3">Membrane</location>
        <topology evidence="3">Single-pass membrane protein</topology>
    </subcellularLocation>
</comment>
<comment type="alternative products">
    <event type="alternative splicing"/>
    <isoform>
        <id>O81866-1</id>
        <name>1</name>
        <sequence type="displayed"/>
    </isoform>
    <text>A number of isoforms are produced. According to EST sequences.</text>
</comment>
<comment type="tissue specificity">
    <text evidence="2">Vascular tissues, specifically in phloem companion cell-sieve element complexes.</text>
</comment>
<dbReference type="EMBL" id="AL024486">
    <property type="protein sequence ID" value="CAA19702.1"/>
    <property type="molecule type" value="Genomic_DNA"/>
</dbReference>
<dbReference type="EMBL" id="AL161551">
    <property type="protein sequence ID" value="CAB78987.1"/>
    <property type="molecule type" value="Genomic_DNA"/>
</dbReference>
<dbReference type="EMBL" id="CP002687">
    <property type="status" value="NOT_ANNOTATED_CDS"/>
    <property type="molecule type" value="Genomic_DNA"/>
</dbReference>
<dbReference type="EMBL" id="BT015604">
    <property type="status" value="NOT_ANNOTATED_CDS"/>
    <property type="molecule type" value="mRNA"/>
</dbReference>
<dbReference type="PIR" id="T04766">
    <property type="entry name" value="T04766"/>
</dbReference>
<dbReference type="SMR" id="O81866"/>
<dbReference type="BioGRID" id="13022">
    <property type="interactions" value="1"/>
</dbReference>
<dbReference type="STRING" id="3702.O81866"/>
<dbReference type="PaxDb" id="3702-AT4G19850.2"/>
<dbReference type="DNASU" id="827729"/>
<dbReference type="Araport" id="AT4G19850"/>
<dbReference type="TAIR" id="AT4G19850">
    <property type="gene designation" value="PP2-A2"/>
</dbReference>
<dbReference type="eggNOG" id="KOG0017">
    <property type="taxonomic scope" value="Eukaryota"/>
</dbReference>
<dbReference type="HOGENOM" id="CLU_1404210_0_0_1"/>
<dbReference type="InParanoid" id="O81866"/>
<dbReference type="PhylomeDB" id="O81866"/>
<dbReference type="PRO" id="PR:O81866"/>
<dbReference type="Proteomes" id="UP000006548">
    <property type="component" value="Chromosome 4"/>
</dbReference>
<dbReference type="ExpressionAtlas" id="O81866">
    <property type="expression patterns" value="baseline and differential"/>
</dbReference>
<dbReference type="GO" id="GO:0016020">
    <property type="term" value="C:membrane"/>
    <property type="evidence" value="ECO:0007669"/>
    <property type="project" value="UniProtKB-SubCell"/>
</dbReference>
<dbReference type="GO" id="GO:0030246">
    <property type="term" value="F:carbohydrate binding"/>
    <property type="evidence" value="ECO:0007669"/>
    <property type="project" value="InterPro"/>
</dbReference>
<dbReference type="InterPro" id="IPR025886">
    <property type="entry name" value="PP2-like"/>
</dbReference>
<dbReference type="InterPro" id="IPR052147">
    <property type="entry name" value="PP2-like/Lectin"/>
</dbReference>
<dbReference type="PANTHER" id="PTHR48478">
    <property type="entry name" value="LECTIN-LIKE"/>
    <property type="match status" value="1"/>
</dbReference>
<dbReference type="PANTHER" id="PTHR48478:SF1">
    <property type="entry name" value="LECTIN-LIKE"/>
    <property type="match status" value="1"/>
</dbReference>
<dbReference type="Pfam" id="PF14299">
    <property type="entry name" value="PP2"/>
    <property type="match status" value="1"/>
</dbReference>
<gene>
    <name type="primary">PP2A2</name>
    <name type="ordered locus">At4g19850</name>
    <name type="ORF">T16H5.210</name>
</gene>
<accession>O81866</accession>
<reference key="1">
    <citation type="journal article" date="1999" name="Nature">
        <title>Sequence and analysis of chromosome 4 of the plant Arabidopsis thaliana.</title>
        <authorList>
            <person name="Mayer K.F.X."/>
            <person name="Schueller C."/>
            <person name="Wambutt R."/>
            <person name="Murphy G."/>
            <person name="Volckaert G."/>
            <person name="Pohl T."/>
            <person name="Duesterhoeft A."/>
            <person name="Stiekema W."/>
            <person name="Entian K.-D."/>
            <person name="Terryn N."/>
            <person name="Harris B."/>
            <person name="Ansorge W."/>
            <person name="Brandt P."/>
            <person name="Grivell L.A."/>
            <person name="Rieger M."/>
            <person name="Weichselgartner M."/>
            <person name="de Simone V."/>
            <person name="Obermaier B."/>
            <person name="Mache R."/>
            <person name="Mueller M."/>
            <person name="Kreis M."/>
            <person name="Delseny M."/>
            <person name="Puigdomenech P."/>
            <person name="Watson M."/>
            <person name="Schmidtheini T."/>
            <person name="Reichert B."/>
            <person name="Portetelle D."/>
            <person name="Perez-Alonso M."/>
            <person name="Boutry M."/>
            <person name="Bancroft I."/>
            <person name="Vos P."/>
            <person name="Hoheisel J."/>
            <person name="Zimmermann W."/>
            <person name="Wedler H."/>
            <person name="Ridley P."/>
            <person name="Langham S.-A."/>
            <person name="McCullagh B."/>
            <person name="Bilham L."/>
            <person name="Robben J."/>
            <person name="van der Schueren J."/>
            <person name="Grymonprez B."/>
            <person name="Chuang Y.-J."/>
            <person name="Vandenbussche F."/>
            <person name="Braeken M."/>
            <person name="Weltjens I."/>
            <person name="Voet M."/>
            <person name="Bastiaens I."/>
            <person name="Aert R."/>
            <person name="Defoor E."/>
            <person name="Weitzenegger T."/>
            <person name="Bothe G."/>
            <person name="Ramsperger U."/>
            <person name="Hilbert H."/>
            <person name="Braun M."/>
            <person name="Holzer E."/>
            <person name="Brandt A."/>
            <person name="Peters S."/>
            <person name="van Staveren M."/>
            <person name="Dirkse W."/>
            <person name="Mooijman P."/>
            <person name="Klein Lankhorst R."/>
            <person name="Rose M."/>
            <person name="Hauf J."/>
            <person name="Koetter P."/>
            <person name="Berneiser S."/>
            <person name="Hempel S."/>
            <person name="Feldpausch M."/>
            <person name="Lamberth S."/>
            <person name="Van den Daele H."/>
            <person name="De Keyser A."/>
            <person name="Buysshaert C."/>
            <person name="Gielen J."/>
            <person name="Villarroel R."/>
            <person name="De Clercq R."/>
            <person name="van Montagu M."/>
            <person name="Rogers J."/>
            <person name="Cronin A."/>
            <person name="Quail M.A."/>
            <person name="Bray-Allen S."/>
            <person name="Clark L."/>
            <person name="Doggett J."/>
            <person name="Hall S."/>
            <person name="Kay M."/>
            <person name="Lennard N."/>
            <person name="McLay K."/>
            <person name="Mayes R."/>
            <person name="Pettett A."/>
            <person name="Rajandream M.A."/>
            <person name="Lyne M."/>
            <person name="Benes V."/>
            <person name="Rechmann S."/>
            <person name="Borkova D."/>
            <person name="Bloecker H."/>
            <person name="Scharfe M."/>
            <person name="Grimm M."/>
            <person name="Loehnert T.-H."/>
            <person name="Dose S."/>
            <person name="de Haan M."/>
            <person name="Maarse A.C."/>
            <person name="Schaefer M."/>
            <person name="Mueller-Auer S."/>
            <person name="Gabel C."/>
            <person name="Fuchs M."/>
            <person name="Fartmann B."/>
            <person name="Granderath K."/>
            <person name="Dauner D."/>
            <person name="Herzl A."/>
            <person name="Neumann S."/>
            <person name="Argiriou A."/>
            <person name="Vitale D."/>
            <person name="Liguori R."/>
            <person name="Piravandi E."/>
            <person name="Massenet O."/>
            <person name="Quigley F."/>
            <person name="Clabauld G."/>
            <person name="Muendlein A."/>
            <person name="Felber R."/>
            <person name="Schnabl S."/>
            <person name="Hiller R."/>
            <person name="Schmidt W."/>
            <person name="Lecharny A."/>
            <person name="Aubourg S."/>
            <person name="Chefdor F."/>
            <person name="Cooke R."/>
            <person name="Berger C."/>
            <person name="Monfort A."/>
            <person name="Casacuberta E."/>
            <person name="Gibbons T."/>
            <person name="Weber N."/>
            <person name="Vandenbol M."/>
            <person name="Bargues M."/>
            <person name="Terol J."/>
            <person name="Torres A."/>
            <person name="Perez-Perez A."/>
            <person name="Purnelle B."/>
            <person name="Bent E."/>
            <person name="Johnson S."/>
            <person name="Tacon D."/>
            <person name="Jesse T."/>
            <person name="Heijnen L."/>
            <person name="Schwarz S."/>
            <person name="Scholler P."/>
            <person name="Heber S."/>
            <person name="Francs P."/>
            <person name="Bielke C."/>
            <person name="Frishman D."/>
            <person name="Haase D."/>
            <person name="Lemcke K."/>
            <person name="Mewes H.-W."/>
            <person name="Stocker S."/>
            <person name="Zaccaria P."/>
            <person name="Bevan M."/>
            <person name="Wilson R.K."/>
            <person name="de la Bastide M."/>
            <person name="Habermann K."/>
            <person name="Parnell L."/>
            <person name="Dedhia N."/>
            <person name="Gnoj L."/>
            <person name="Schutz K."/>
            <person name="Huang E."/>
            <person name="Spiegel L."/>
            <person name="Sekhon M."/>
            <person name="Murray J."/>
            <person name="Sheet P."/>
            <person name="Cordes M."/>
            <person name="Abu-Threideh J."/>
            <person name="Stoneking T."/>
            <person name="Kalicki J."/>
            <person name="Graves T."/>
            <person name="Harmon G."/>
            <person name="Edwards J."/>
            <person name="Latreille P."/>
            <person name="Courtney L."/>
            <person name="Cloud J."/>
            <person name="Abbott A."/>
            <person name="Scott K."/>
            <person name="Johnson D."/>
            <person name="Minx P."/>
            <person name="Bentley D."/>
            <person name="Fulton B."/>
            <person name="Miller N."/>
            <person name="Greco T."/>
            <person name="Kemp K."/>
            <person name="Kramer J."/>
            <person name="Fulton L."/>
            <person name="Mardis E."/>
            <person name="Dante M."/>
            <person name="Pepin K."/>
            <person name="Hillier L.W."/>
            <person name="Nelson J."/>
            <person name="Spieth J."/>
            <person name="Ryan E."/>
            <person name="Andrews S."/>
            <person name="Geisel C."/>
            <person name="Layman D."/>
            <person name="Du H."/>
            <person name="Ali J."/>
            <person name="Berghoff A."/>
            <person name="Jones K."/>
            <person name="Drone K."/>
            <person name="Cotton M."/>
            <person name="Joshu C."/>
            <person name="Antonoiu B."/>
            <person name="Zidanic M."/>
            <person name="Strong C."/>
            <person name="Sun H."/>
            <person name="Lamar B."/>
            <person name="Yordan C."/>
            <person name="Ma P."/>
            <person name="Zhong J."/>
            <person name="Preston R."/>
            <person name="Vil D."/>
            <person name="Shekher M."/>
            <person name="Matero A."/>
            <person name="Shah R."/>
            <person name="Swaby I.K."/>
            <person name="O'Shaughnessy A."/>
            <person name="Rodriguez M."/>
            <person name="Hoffman J."/>
            <person name="Till S."/>
            <person name="Granat S."/>
            <person name="Shohdy N."/>
            <person name="Hasegawa A."/>
            <person name="Hameed A."/>
            <person name="Lodhi M."/>
            <person name="Johnson A."/>
            <person name="Chen E."/>
            <person name="Marra M.A."/>
            <person name="Martienssen R."/>
            <person name="McCombie W.R."/>
        </authorList>
    </citation>
    <scope>NUCLEOTIDE SEQUENCE [LARGE SCALE GENOMIC DNA]</scope>
    <source>
        <strain>cv. Columbia</strain>
    </source>
</reference>
<reference key="2">
    <citation type="journal article" date="2017" name="Plant J.">
        <title>Araport11: a complete reannotation of the Arabidopsis thaliana reference genome.</title>
        <authorList>
            <person name="Cheng C.Y."/>
            <person name="Krishnakumar V."/>
            <person name="Chan A.P."/>
            <person name="Thibaud-Nissen F."/>
            <person name="Schobel S."/>
            <person name="Town C.D."/>
        </authorList>
    </citation>
    <scope>GENOME REANNOTATION</scope>
    <source>
        <strain>cv. Columbia</strain>
    </source>
</reference>
<reference key="3">
    <citation type="submission" date="2004-09" db="EMBL/GenBank/DDBJ databases">
        <authorList>
            <consortium name="Center for eukaryotic structural genomics (CESG)"/>
        </authorList>
    </citation>
    <scope>NUCLEOTIDE SEQUENCE [LARGE SCALE MRNA] OF 65-194</scope>
    <source>
        <strain>cv. Columbia</strain>
    </source>
</reference>
<reference key="4">
    <citation type="journal article" date="2003" name="Plant Physiol.">
        <title>Diversity of the superfamily of phloem lectins (phloem protein 2) in angiosperms.</title>
        <authorList>
            <person name="Dinant S."/>
            <person name="Clark A.M."/>
            <person name="Zhu Y."/>
            <person name="Vilaine F."/>
            <person name="Palauqui J.-C."/>
            <person name="Kusiak C."/>
            <person name="Thompson G.A."/>
        </authorList>
    </citation>
    <scope>TISSUE SPECIFICITY</scope>
    <scope>GENE FAMILY</scope>
    <scope>NOMENCLATURE</scope>
</reference>
<evidence type="ECO:0000255" key="1"/>
<evidence type="ECO:0000269" key="2">
    <source>
    </source>
</evidence>
<evidence type="ECO:0000305" key="3"/>
<proteinExistence type="evidence at transcript level"/>